<gene>
    <name evidence="1" type="primary">argB</name>
    <name type="ordered locus">DP0439</name>
</gene>
<sequence length="296" mass="31971">MNDTVEKSIERAKVLIESLPYMQEFRHKTIVIKYGGHAMVDEALKKQFALDVILLKQIGINPIIVHGGGPQINNLLDRLDIKPSYVQGMRVTDGETMDVVEMVLVGKVNKEIVGLINHCGGKAVGLSGRDGDLVCAEQLQMNQAQVGDNPPELIDVGRVGQVTKINSHVLETLSQDDFIPIIAPVGVGEDGRAFNINADLVASAIAAELSAEKLILLTDVPGVKNKAGDLLTTLEWQELNGLIEDGTIMGGMIPKVRCCEDAVKGGVAKTYIVDGRVEHAILLEIFTRDGVGTEIY</sequence>
<protein>
    <recommendedName>
        <fullName evidence="1">Acetylglutamate kinase</fullName>
        <ecNumber evidence="1">2.7.2.8</ecNumber>
    </recommendedName>
    <alternativeName>
        <fullName evidence="1">N-acetyl-L-glutamate 5-phosphotransferase</fullName>
    </alternativeName>
    <alternativeName>
        <fullName evidence="1">NAG kinase</fullName>
        <shortName evidence="1">NAGK</shortName>
    </alternativeName>
</protein>
<feature type="chain" id="PRO_0000112612" description="Acetylglutamate kinase">
    <location>
        <begin position="1"/>
        <end position="296"/>
    </location>
</feature>
<feature type="binding site" evidence="1">
    <location>
        <begin position="68"/>
        <end position="69"/>
    </location>
    <ligand>
        <name>substrate</name>
    </ligand>
</feature>
<feature type="binding site" evidence="1">
    <location>
        <position position="90"/>
    </location>
    <ligand>
        <name>substrate</name>
    </ligand>
</feature>
<feature type="binding site" evidence="1">
    <location>
        <position position="195"/>
    </location>
    <ligand>
        <name>substrate</name>
    </ligand>
</feature>
<feature type="site" description="Transition state stabilizer" evidence="1">
    <location>
        <position position="33"/>
    </location>
</feature>
<feature type="site" description="Transition state stabilizer" evidence="1">
    <location>
        <position position="255"/>
    </location>
</feature>
<accession>Q6AR56</accession>
<dbReference type="EC" id="2.7.2.8" evidence="1"/>
<dbReference type="EMBL" id="CR522870">
    <property type="protein sequence ID" value="CAG35168.1"/>
    <property type="molecule type" value="Genomic_DNA"/>
</dbReference>
<dbReference type="RefSeq" id="WP_011187684.1">
    <property type="nucleotide sequence ID" value="NC_006138.1"/>
</dbReference>
<dbReference type="SMR" id="Q6AR56"/>
<dbReference type="STRING" id="177439.DP0439"/>
<dbReference type="KEGG" id="dps:DP0439"/>
<dbReference type="eggNOG" id="COG0548">
    <property type="taxonomic scope" value="Bacteria"/>
</dbReference>
<dbReference type="HOGENOM" id="CLU_053680_0_0_7"/>
<dbReference type="OrthoDB" id="9803155at2"/>
<dbReference type="UniPathway" id="UPA00068">
    <property type="reaction ID" value="UER00107"/>
</dbReference>
<dbReference type="Proteomes" id="UP000000602">
    <property type="component" value="Chromosome"/>
</dbReference>
<dbReference type="GO" id="GO:0005737">
    <property type="term" value="C:cytoplasm"/>
    <property type="evidence" value="ECO:0007669"/>
    <property type="project" value="UniProtKB-SubCell"/>
</dbReference>
<dbReference type="GO" id="GO:0003991">
    <property type="term" value="F:acetylglutamate kinase activity"/>
    <property type="evidence" value="ECO:0007669"/>
    <property type="project" value="UniProtKB-UniRule"/>
</dbReference>
<dbReference type="GO" id="GO:0005524">
    <property type="term" value="F:ATP binding"/>
    <property type="evidence" value="ECO:0007669"/>
    <property type="project" value="UniProtKB-UniRule"/>
</dbReference>
<dbReference type="GO" id="GO:0042450">
    <property type="term" value="P:arginine biosynthetic process via ornithine"/>
    <property type="evidence" value="ECO:0007669"/>
    <property type="project" value="UniProtKB-UniRule"/>
</dbReference>
<dbReference type="GO" id="GO:0006526">
    <property type="term" value="P:L-arginine biosynthetic process"/>
    <property type="evidence" value="ECO:0007669"/>
    <property type="project" value="UniProtKB-UniPathway"/>
</dbReference>
<dbReference type="CDD" id="cd04250">
    <property type="entry name" value="AAK_NAGK-C"/>
    <property type="match status" value="1"/>
</dbReference>
<dbReference type="FunFam" id="3.40.1160.10:FF:000004">
    <property type="entry name" value="Acetylglutamate kinase"/>
    <property type="match status" value="1"/>
</dbReference>
<dbReference type="Gene3D" id="3.40.1160.10">
    <property type="entry name" value="Acetylglutamate kinase-like"/>
    <property type="match status" value="1"/>
</dbReference>
<dbReference type="HAMAP" id="MF_00082">
    <property type="entry name" value="ArgB"/>
    <property type="match status" value="1"/>
</dbReference>
<dbReference type="InterPro" id="IPR036393">
    <property type="entry name" value="AceGlu_kinase-like_sf"/>
</dbReference>
<dbReference type="InterPro" id="IPR004662">
    <property type="entry name" value="AcgluKinase_fam"/>
</dbReference>
<dbReference type="InterPro" id="IPR037528">
    <property type="entry name" value="ArgB"/>
</dbReference>
<dbReference type="InterPro" id="IPR001048">
    <property type="entry name" value="Asp/Glu/Uridylate_kinase"/>
</dbReference>
<dbReference type="InterPro" id="IPR001057">
    <property type="entry name" value="Glu/AcGlu_kinase"/>
</dbReference>
<dbReference type="InterPro" id="IPR041727">
    <property type="entry name" value="NAGK-C"/>
</dbReference>
<dbReference type="NCBIfam" id="TIGR00761">
    <property type="entry name" value="argB"/>
    <property type="match status" value="1"/>
</dbReference>
<dbReference type="PANTHER" id="PTHR23342">
    <property type="entry name" value="N-ACETYLGLUTAMATE SYNTHASE"/>
    <property type="match status" value="1"/>
</dbReference>
<dbReference type="PANTHER" id="PTHR23342:SF0">
    <property type="entry name" value="N-ACETYLGLUTAMATE SYNTHASE, MITOCHONDRIAL"/>
    <property type="match status" value="1"/>
</dbReference>
<dbReference type="Pfam" id="PF00696">
    <property type="entry name" value="AA_kinase"/>
    <property type="match status" value="1"/>
</dbReference>
<dbReference type="PIRSF" id="PIRSF000728">
    <property type="entry name" value="NAGK"/>
    <property type="match status" value="1"/>
</dbReference>
<dbReference type="PRINTS" id="PR00474">
    <property type="entry name" value="GLU5KINASE"/>
</dbReference>
<dbReference type="SUPFAM" id="SSF53633">
    <property type="entry name" value="Carbamate kinase-like"/>
    <property type="match status" value="1"/>
</dbReference>
<proteinExistence type="inferred from homology"/>
<name>ARGB_DESPS</name>
<keyword id="KW-0028">Amino-acid biosynthesis</keyword>
<keyword id="KW-0055">Arginine biosynthesis</keyword>
<keyword id="KW-0067">ATP-binding</keyword>
<keyword id="KW-0963">Cytoplasm</keyword>
<keyword id="KW-0418">Kinase</keyword>
<keyword id="KW-0547">Nucleotide-binding</keyword>
<keyword id="KW-1185">Reference proteome</keyword>
<keyword id="KW-0808">Transferase</keyword>
<evidence type="ECO:0000255" key="1">
    <source>
        <dbReference type="HAMAP-Rule" id="MF_00082"/>
    </source>
</evidence>
<organism>
    <name type="scientific">Desulfotalea psychrophila (strain LSv54 / DSM 12343)</name>
    <dbReference type="NCBI Taxonomy" id="177439"/>
    <lineage>
        <taxon>Bacteria</taxon>
        <taxon>Pseudomonadati</taxon>
        <taxon>Thermodesulfobacteriota</taxon>
        <taxon>Desulfobulbia</taxon>
        <taxon>Desulfobulbales</taxon>
        <taxon>Desulfocapsaceae</taxon>
        <taxon>Desulfotalea</taxon>
    </lineage>
</organism>
<reference key="1">
    <citation type="journal article" date="2004" name="Environ. Microbiol.">
        <title>The genome of Desulfotalea psychrophila, a sulfate-reducing bacterium from permanently cold Arctic sediments.</title>
        <authorList>
            <person name="Rabus R."/>
            <person name="Ruepp A."/>
            <person name="Frickey T."/>
            <person name="Rattei T."/>
            <person name="Fartmann B."/>
            <person name="Stark M."/>
            <person name="Bauer M."/>
            <person name="Zibat A."/>
            <person name="Lombardot T."/>
            <person name="Becker I."/>
            <person name="Amann J."/>
            <person name="Gellner K."/>
            <person name="Teeling H."/>
            <person name="Leuschner W.D."/>
            <person name="Gloeckner F.-O."/>
            <person name="Lupas A.N."/>
            <person name="Amann R."/>
            <person name="Klenk H.-P."/>
        </authorList>
    </citation>
    <scope>NUCLEOTIDE SEQUENCE [LARGE SCALE GENOMIC DNA]</scope>
    <source>
        <strain>DSM 12343 / LSv54</strain>
    </source>
</reference>
<comment type="function">
    <text evidence="1">Catalyzes the ATP-dependent phosphorylation of N-acetyl-L-glutamate.</text>
</comment>
<comment type="catalytic activity">
    <reaction evidence="1">
        <text>N-acetyl-L-glutamate + ATP = N-acetyl-L-glutamyl 5-phosphate + ADP</text>
        <dbReference type="Rhea" id="RHEA:14629"/>
        <dbReference type="ChEBI" id="CHEBI:30616"/>
        <dbReference type="ChEBI" id="CHEBI:44337"/>
        <dbReference type="ChEBI" id="CHEBI:57936"/>
        <dbReference type="ChEBI" id="CHEBI:456216"/>
        <dbReference type="EC" id="2.7.2.8"/>
    </reaction>
</comment>
<comment type="pathway">
    <text evidence="1">Amino-acid biosynthesis; L-arginine biosynthesis; N(2)-acetyl-L-ornithine from L-glutamate: step 2/4.</text>
</comment>
<comment type="subcellular location">
    <subcellularLocation>
        <location evidence="1">Cytoplasm</location>
    </subcellularLocation>
</comment>
<comment type="similarity">
    <text evidence="1">Belongs to the acetylglutamate kinase family. ArgB subfamily.</text>
</comment>